<comment type="function">
    <text evidence="1">Catalyzes the condensation of pantoate with beta-alanine in an ATP-dependent reaction via a pantoyl-adenylate intermediate.</text>
</comment>
<comment type="catalytic activity">
    <reaction evidence="1">
        <text>(R)-pantoate + beta-alanine + ATP = (R)-pantothenate + AMP + diphosphate + H(+)</text>
        <dbReference type="Rhea" id="RHEA:10912"/>
        <dbReference type="ChEBI" id="CHEBI:15378"/>
        <dbReference type="ChEBI" id="CHEBI:15980"/>
        <dbReference type="ChEBI" id="CHEBI:29032"/>
        <dbReference type="ChEBI" id="CHEBI:30616"/>
        <dbReference type="ChEBI" id="CHEBI:33019"/>
        <dbReference type="ChEBI" id="CHEBI:57966"/>
        <dbReference type="ChEBI" id="CHEBI:456215"/>
        <dbReference type="EC" id="6.3.2.1"/>
    </reaction>
</comment>
<comment type="pathway">
    <text evidence="1">Cofactor biosynthesis; (R)-pantothenate biosynthesis; (R)-pantothenate from (R)-pantoate and beta-alanine: step 1/1.</text>
</comment>
<comment type="subunit">
    <text evidence="1">Homodimer.</text>
</comment>
<comment type="subcellular location">
    <subcellularLocation>
        <location evidence="1">Cytoplasm</location>
    </subcellularLocation>
</comment>
<comment type="miscellaneous">
    <text evidence="1">The reaction proceeds by a bi uni uni bi ping pong mechanism.</text>
</comment>
<comment type="similarity">
    <text evidence="1">Belongs to the pantothenate synthetase family.</text>
</comment>
<evidence type="ECO:0000255" key="1">
    <source>
        <dbReference type="HAMAP-Rule" id="MF_00158"/>
    </source>
</evidence>
<keyword id="KW-0067">ATP-binding</keyword>
<keyword id="KW-0963">Cytoplasm</keyword>
<keyword id="KW-0436">Ligase</keyword>
<keyword id="KW-0547">Nucleotide-binding</keyword>
<keyword id="KW-0566">Pantothenate biosynthesis</keyword>
<name>PANC_CHESB</name>
<accession>Q11F81</accession>
<sequence>MSVPIFRTVKELRAAVADWRRDGLRVGVVPTMGALHEGHLSLVRAALANTDRVIVTLFVNPKQFNNAGDLAAYPRTEKEDAAKLAPLGAHMLYAPDGAEMYPNGFSTTVSVSGVSEGLCGAFRPGHFDGVATVVTKLLLQTGADLAFFGEKDFQQLHVVRRLTRDLDIPTQIIACPTVREADGLALSSRNVRLSADDRRNAPKLAEALFAAAGRLAEGTPVAEVLPNARDAILAAGYQEVEYLELRGEDDLAPLSGLDRPARLLVAAWIGGVRLIDNLPVAQPA</sequence>
<proteinExistence type="inferred from homology"/>
<dbReference type="EC" id="6.3.2.1" evidence="1"/>
<dbReference type="EMBL" id="CP000390">
    <property type="protein sequence ID" value="ABG63944.1"/>
    <property type="molecule type" value="Genomic_DNA"/>
</dbReference>
<dbReference type="SMR" id="Q11F81"/>
<dbReference type="STRING" id="266779.Meso_2560"/>
<dbReference type="KEGG" id="mes:Meso_2560"/>
<dbReference type="eggNOG" id="COG0414">
    <property type="taxonomic scope" value="Bacteria"/>
</dbReference>
<dbReference type="HOGENOM" id="CLU_047148_0_0_5"/>
<dbReference type="OrthoDB" id="9773087at2"/>
<dbReference type="UniPathway" id="UPA00028">
    <property type="reaction ID" value="UER00005"/>
</dbReference>
<dbReference type="GO" id="GO:0005829">
    <property type="term" value="C:cytosol"/>
    <property type="evidence" value="ECO:0007669"/>
    <property type="project" value="TreeGrafter"/>
</dbReference>
<dbReference type="GO" id="GO:0005524">
    <property type="term" value="F:ATP binding"/>
    <property type="evidence" value="ECO:0007669"/>
    <property type="project" value="UniProtKB-KW"/>
</dbReference>
<dbReference type="GO" id="GO:0004592">
    <property type="term" value="F:pantoate-beta-alanine ligase activity"/>
    <property type="evidence" value="ECO:0007669"/>
    <property type="project" value="UniProtKB-UniRule"/>
</dbReference>
<dbReference type="GO" id="GO:0015940">
    <property type="term" value="P:pantothenate biosynthetic process"/>
    <property type="evidence" value="ECO:0007669"/>
    <property type="project" value="UniProtKB-UniRule"/>
</dbReference>
<dbReference type="CDD" id="cd00560">
    <property type="entry name" value="PanC"/>
    <property type="match status" value="1"/>
</dbReference>
<dbReference type="Gene3D" id="3.40.50.620">
    <property type="entry name" value="HUPs"/>
    <property type="match status" value="1"/>
</dbReference>
<dbReference type="Gene3D" id="3.30.1300.10">
    <property type="entry name" value="Pantoate-beta-alanine ligase, C-terminal domain"/>
    <property type="match status" value="1"/>
</dbReference>
<dbReference type="HAMAP" id="MF_00158">
    <property type="entry name" value="PanC"/>
    <property type="match status" value="1"/>
</dbReference>
<dbReference type="InterPro" id="IPR003721">
    <property type="entry name" value="Pantoate_ligase"/>
</dbReference>
<dbReference type="InterPro" id="IPR042176">
    <property type="entry name" value="Pantoate_ligase_C"/>
</dbReference>
<dbReference type="InterPro" id="IPR014729">
    <property type="entry name" value="Rossmann-like_a/b/a_fold"/>
</dbReference>
<dbReference type="NCBIfam" id="TIGR00018">
    <property type="entry name" value="panC"/>
    <property type="match status" value="1"/>
</dbReference>
<dbReference type="PANTHER" id="PTHR21299">
    <property type="entry name" value="CYTIDYLATE KINASE/PANTOATE-BETA-ALANINE LIGASE"/>
    <property type="match status" value="1"/>
</dbReference>
<dbReference type="PANTHER" id="PTHR21299:SF1">
    <property type="entry name" value="PANTOATE--BETA-ALANINE LIGASE"/>
    <property type="match status" value="1"/>
</dbReference>
<dbReference type="Pfam" id="PF02569">
    <property type="entry name" value="Pantoate_ligase"/>
    <property type="match status" value="1"/>
</dbReference>
<dbReference type="SUPFAM" id="SSF52374">
    <property type="entry name" value="Nucleotidylyl transferase"/>
    <property type="match status" value="1"/>
</dbReference>
<protein>
    <recommendedName>
        <fullName evidence="1">Pantothenate synthetase</fullName>
        <shortName evidence="1">PS</shortName>
        <ecNumber evidence="1">6.3.2.1</ecNumber>
    </recommendedName>
    <alternativeName>
        <fullName evidence="1">Pantoate--beta-alanine ligase</fullName>
    </alternativeName>
    <alternativeName>
        <fullName evidence="1">Pantoate-activating enzyme</fullName>
    </alternativeName>
</protein>
<gene>
    <name evidence="1" type="primary">panC</name>
    <name type="ordered locus">Meso_2560</name>
</gene>
<feature type="chain" id="PRO_0000305481" description="Pantothenate synthetase">
    <location>
        <begin position="1"/>
        <end position="284"/>
    </location>
</feature>
<feature type="active site" description="Proton donor" evidence="1">
    <location>
        <position position="39"/>
    </location>
</feature>
<feature type="binding site" evidence="1">
    <location>
        <begin position="32"/>
        <end position="39"/>
    </location>
    <ligand>
        <name>ATP</name>
        <dbReference type="ChEBI" id="CHEBI:30616"/>
    </ligand>
</feature>
<feature type="binding site" evidence="1">
    <location>
        <position position="63"/>
    </location>
    <ligand>
        <name>(R)-pantoate</name>
        <dbReference type="ChEBI" id="CHEBI:15980"/>
    </ligand>
</feature>
<feature type="binding site" evidence="1">
    <location>
        <position position="63"/>
    </location>
    <ligand>
        <name>beta-alanine</name>
        <dbReference type="ChEBI" id="CHEBI:57966"/>
    </ligand>
</feature>
<feature type="binding site" evidence="1">
    <location>
        <begin position="149"/>
        <end position="152"/>
    </location>
    <ligand>
        <name>ATP</name>
        <dbReference type="ChEBI" id="CHEBI:30616"/>
    </ligand>
</feature>
<feature type="binding site" evidence="1">
    <location>
        <position position="155"/>
    </location>
    <ligand>
        <name>(R)-pantoate</name>
        <dbReference type="ChEBI" id="CHEBI:15980"/>
    </ligand>
</feature>
<feature type="binding site" evidence="1">
    <location>
        <position position="178"/>
    </location>
    <ligand>
        <name>ATP</name>
        <dbReference type="ChEBI" id="CHEBI:30616"/>
    </ligand>
</feature>
<feature type="binding site" evidence="1">
    <location>
        <begin position="186"/>
        <end position="189"/>
    </location>
    <ligand>
        <name>ATP</name>
        <dbReference type="ChEBI" id="CHEBI:30616"/>
    </ligand>
</feature>
<organism>
    <name type="scientific">Chelativorans sp. (strain BNC1)</name>
    <dbReference type="NCBI Taxonomy" id="266779"/>
    <lineage>
        <taxon>Bacteria</taxon>
        <taxon>Pseudomonadati</taxon>
        <taxon>Pseudomonadota</taxon>
        <taxon>Alphaproteobacteria</taxon>
        <taxon>Hyphomicrobiales</taxon>
        <taxon>Phyllobacteriaceae</taxon>
        <taxon>Chelativorans</taxon>
    </lineage>
</organism>
<reference key="1">
    <citation type="submission" date="2006-06" db="EMBL/GenBank/DDBJ databases">
        <title>Complete sequence of chromosome of Mesorhizobium sp. BNC1.</title>
        <authorList>
            <consortium name="US DOE Joint Genome Institute"/>
            <person name="Copeland A."/>
            <person name="Lucas S."/>
            <person name="Lapidus A."/>
            <person name="Barry K."/>
            <person name="Detter J.C."/>
            <person name="Glavina del Rio T."/>
            <person name="Hammon N."/>
            <person name="Israni S."/>
            <person name="Dalin E."/>
            <person name="Tice H."/>
            <person name="Pitluck S."/>
            <person name="Chertkov O."/>
            <person name="Brettin T."/>
            <person name="Bruce D."/>
            <person name="Han C."/>
            <person name="Tapia R."/>
            <person name="Gilna P."/>
            <person name="Schmutz J."/>
            <person name="Larimer F."/>
            <person name="Land M."/>
            <person name="Hauser L."/>
            <person name="Kyrpides N."/>
            <person name="Mikhailova N."/>
            <person name="Richardson P."/>
        </authorList>
    </citation>
    <scope>NUCLEOTIDE SEQUENCE [LARGE SCALE GENOMIC DNA]</scope>
    <source>
        <strain>BNC1</strain>
    </source>
</reference>